<name>RL7_SHEB9</name>
<protein>
    <recommendedName>
        <fullName evidence="1">Large ribosomal subunit protein bL12</fullName>
    </recommendedName>
    <alternativeName>
        <fullName evidence="2">50S ribosomal protein L7/L12</fullName>
    </alternativeName>
</protein>
<proteinExistence type="inferred from homology"/>
<gene>
    <name evidence="1" type="primary">rplL</name>
    <name type="ordered locus">Sbal195_0192</name>
</gene>
<keyword id="KW-0687">Ribonucleoprotein</keyword>
<keyword id="KW-0689">Ribosomal protein</keyword>
<dbReference type="EMBL" id="CP000891">
    <property type="protein sequence ID" value="ABX47374.1"/>
    <property type="molecule type" value="Genomic_DNA"/>
</dbReference>
<dbReference type="RefSeq" id="WP_006083608.1">
    <property type="nucleotide sequence ID" value="NC_009997.1"/>
</dbReference>
<dbReference type="SMR" id="A9KW94"/>
<dbReference type="GeneID" id="11770552"/>
<dbReference type="KEGG" id="sbn:Sbal195_0192"/>
<dbReference type="HOGENOM" id="CLU_086499_3_2_6"/>
<dbReference type="Proteomes" id="UP000000770">
    <property type="component" value="Chromosome"/>
</dbReference>
<dbReference type="GO" id="GO:0022625">
    <property type="term" value="C:cytosolic large ribosomal subunit"/>
    <property type="evidence" value="ECO:0007669"/>
    <property type="project" value="TreeGrafter"/>
</dbReference>
<dbReference type="GO" id="GO:0003729">
    <property type="term" value="F:mRNA binding"/>
    <property type="evidence" value="ECO:0007669"/>
    <property type="project" value="TreeGrafter"/>
</dbReference>
<dbReference type="GO" id="GO:0003735">
    <property type="term" value="F:structural constituent of ribosome"/>
    <property type="evidence" value="ECO:0007669"/>
    <property type="project" value="InterPro"/>
</dbReference>
<dbReference type="GO" id="GO:0006412">
    <property type="term" value="P:translation"/>
    <property type="evidence" value="ECO:0007669"/>
    <property type="project" value="UniProtKB-UniRule"/>
</dbReference>
<dbReference type="CDD" id="cd00387">
    <property type="entry name" value="Ribosomal_L7_L12"/>
    <property type="match status" value="1"/>
</dbReference>
<dbReference type="FunFam" id="1.20.5.710:FF:000001">
    <property type="entry name" value="50S ribosomal protein L7/L12"/>
    <property type="match status" value="1"/>
</dbReference>
<dbReference type="FunFam" id="3.30.1390.10:FF:000001">
    <property type="entry name" value="50S ribosomal protein L7/L12"/>
    <property type="match status" value="1"/>
</dbReference>
<dbReference type="Gene3D" id="3.30.1390.10">
    <property type="match status" value="1"/>
</dbReference>
<dbReference type="Gene3D" id="1.20.5.710">
    <property type="entry name" value="Single helix bin"/>
    <property type="match status" value="1"/>
</dbReference>
<dbReference type="HAMAP" id="MF_00368">
    <property type="entry name" value="Ribosomal_bL12"/>
    <property type="match status" value="1"/>
</dbReference>
<dbReference type="InterPro" id="IPR000206">
    <property type="entry name" value="Ribosomal_bL12"/>
</dbReference>
<dbReference type="InterPro" id="IPR013823">
    <property type="entry name" value="Ribosomal_bL12_C"/>
</dbReference>
<dbReference type="InterPro" id="IPR014719">
    <property type="entry name" value="Ribosomal_bL12_C/ClpS-like"/>
</dbReference>
<dbReference type="InterPro" id="IPR008932">
    <property type="entry name" value="Ribosomal_bL12_oligo"/>
</dbReference>
<dbReference type="InterPro" id="IPR036235">
    <property type="entry name" value="Ribosomal_bL12_oligo_N_sf"/>
</dbReference>
<dbReference type="NCBIfam" id="TIGR00855">
    <property type="entry name" value="L12"/>
    <property type="match status" value="1"/>
</dbReference>
<dbReference type="PANTHER" id="PTHR45987">
    <property type="entry name" value="39S RIBOSOMAL PROTEIN L12"/>
    <property type="match status" value="1"/>
</dbReference>
<dbReference type="PANTHER" id="PTHR45987:SF4">
    <property type="entry name" value="LARGE RIBOSOMAL SUBUNIT PROTEIN BL12M"/>
    <property type="match status" value="1"/>
</dbReference>
<dbReference type="Pfam" id="PF00542">
    <property type="entry name" value="Ribosomal_L12"/>
    <property type="match status" value="1"/>
</dbReference>
<dbReference type="Pfam" id="PF16320">
    <property type="entry name" value="Ribosomal_L12_N"/>
    <property type="match status" value="1"/>
</dbReference>
<dbReference type="SUPFAM" id="SSF54736">
    <property type="entry name" value="ClpS-like"/>
    <property type="match status" value="1"/>
</dbReference>
<dbReference type="SUPFAM" id="SSF48300">
    <property type="entry name" value="Ribosomal protein L7/12, oligomerisation (N-terminal) domain"/>
    <property type="match status" value="1"/>
</dbReference>
<evidence type="ECO:0000255" key="1">
    <source>
        <dbReference type="HAMAP-Rule" id="MF_00368"/>
    </source>
</evidence>
<evidence type="ECO:0000305" key="2"/>
<sequence length="121" mass="12475">MSITKDQILEAFAAMSVMEVVELIEAMEEKFGVSAAAAVVSGGAEAAVVEEQTEFNVVLTAHGDNKVAVIKAIRGATGLGLKEAKAMSEAAPVAVKEGVSKEEAEALKKELTEAGASVEIK</sequence>
<organism>
    <name type="scientific">Shewanella baltica (strain OS195)</name>
    <dbReference type="NCBI Taxonomy" id="399599"/>
    <lineage>
        <taxon>Bacteria</taxon>
        <taxon>Pseudomonadati</taxon>
        <taxon>Pseudomonadota</taxon>
        <taxon>Gammaproteobacteria</taxon>
        <taxon>Alteromonadales</taxon>
        <taxon>Shewanellaceae</taxon>
        <taxon>Shewanella</taxon>
    </lineage>
</organism>
<feature type="chain" id="PRO_1000079810" description="Large ribosomal subunit protein bL12">
    <location>
        <begin position="1"/>
        <end position="121"/>
    </location>
</feature>
<comment type="function">
    <text evidence="1">Forms part of the ribosomal stalk which helps the ribosome interact with GTP-bound translation factors. Is thus essential for accurate translation.</text>
</comment>
<comment type="subunit">
    <text evidence="1">Homodimer. Part of the ribosomal stalk of the 50S ribosomal subunit. Forms a multimeric L10(L12)X complex, where L10 forms an elongated spine to which 2 to 4 L12 dimers bind in a sequential fashion. Binds GTP-bound translation factors.</text>
</comment>
<comment type="similarity">
    <text evidence="1">Belongs to the bacterial ribosomal protein bL12 family.</text>
</comment>
<accession>A9KW94</accession>
<reference key="1">
    <citation type="submission" date="2007-11" db="EMBL/GenBank/DDBJ databases">
        <title>Complete sequence of chromosome of Shewanella baltica OS195.</title>
        <authorList>
            <consortium name="US DOE Joint Genome Institute"/>
            <person name="Copeland A."/>
            <person name="Lucas S."/>
            <person name="Lapidus A."/>
            <person name="Barry K."/>
            <person name="Glavina del Rio T."/>
            <person name="Dalin E."/>
            <person name="Tice H."/>
            <person name="Pitluck S."/>
            <person name="Chain P."/>
            <person name="Malfatti S."/>
            <person name="Shin M."/>
            <person name="Vergez L."/>
            <person name="Schmutz J."/>
            <person name="Larimer F."/>
            <person name="Land M."/>
            <person name="Hauser L."/>
            <person name="Kyrpides N."/>
            <person name="Kim E."/>
            <person name="Brettar I."/>
            <person name="Rodrigues J."/>
            <person name="Konstantinidis K."/>
            <person name="Klappenbach J."/>
            <person name="Hofle M."/>
            <person name="Tiedje J."/>
            <person name="Richardson P."/>
        </authorList>
    </citation>
    <scope>NUCLEOTIDE SEQUENCE [LARGE SCALE GENOMIC DNA]</scope>
    <source>
        <strain>OS195</strain>
    </source>
</reference>